<dbReference type="EMBL" id="CP000969">
    <property type="protein sequence ID" value="ACB09050.1"/>
    <property type="molecule type" value="Genomic_DNA"/>
</dbReference>
<dbReference type="RefSeq" id="WP_011943281.1">
    <property type="nucleotide sequence ID" value="NC_010483.1"/>
</dbReference>
<dbReference type="SMR" id="B1L9Q2"/>
<dbReference type="KEGG" id="trq:TRQ2_0697"/>
<dbReference type="HOGENOM" id="CLU_164837_0_2_0"/>
<dbReference type="Proteomes" id="UP000001687">
    <property type="component" value="Chromosome"/>
</dbReference>
<dbReference type="GO" id="GO:0005829">
    <property type="term" value="C:cytosol"/>
    <property type="evidence" value="ECO:0007669"/>
    <property type="project" value="TreeGrafter"/>
</dbReference>
<dbReference type="GO" id="GO:0048027">
    <property type="term" value="F:mRNA 5'-UTR binding"/>
    <property type="evidence" value="ECO:0007669"/>
    <property type="project" value="UniProtKB-UniRule"/>
</dbReference>
<dbReference type="GO" id="GO:0044781">
    <property type="term" value="P:bacterial-type flagellum organization"/>
    <property type="evidence" value="ECO:0007669"/>
    <property type="project" value="UniProtKB-KW"/>
</dbReference>
<dbReference type="GO" id="GO:0006402">
    <property type="term" value="P:mRNA catabolic process"/>
    <property type="evidence" value="ECO:0007669"/>
    <property type="project" value="InterPro"/>
</dbReference>
<dbReference type="GO" id="GO:0045947">
    <property type="term" value="P:negative regulation of translational initiation"/>
    <property type="evidence" value="ECO:0007669"/>
    <property type="project" value="UniProtKB-UniRule"/>
</dbReference>
<dbReference type="GO" id="GO:1902208">
    <property type="term" value="P:regulation of bacterial-type flagellum assembly"/>
    <property type="evidence" value="ECO:0007669"/>
    <property type="project" value="UniProtKB-UniRule"/>
</dbReference>
<dbReference type="GO" id="GO:0006109">
    <property type="term" value="P:regulation of carbohydrate metabolic process"/>
    <property type="evidence" value="ECO:0007669"/>
    <property type="project" value="InterPro"/>
</dbReference>
<dbReference type="FunFam" id="2.60.40.4380:FF:000002">
    <property type="entry name" value="Translational regulator CsrA"/>
    <property type="match status" value="1"/>
</dbReference>
<dbReference type="Gene3D" id="2.60.40.4380">
    <property type="entry name" value="Translational regulator CsrA"/>
    <property type="match status" value="1"/>
</dbReference>
<dbReference type="HAMAP" id="MF_00167">
    <property type="entry name" value="CsrA"/>
    <property type="match status" value="1"/>
</dbReference>
<dbReference type="InterPro" id="IPR003751">
    <property type="entry name" value="CsrA"/>
</dbReference>
<dbReference type="InterPro" id="IPR036107">
    <property type="entry name" value="CsrA_sf"/>
</dbReference>
<dbReference type="NCBIfam" id="TIGR00202">
    <property type="entry name" value="csrA"/>
    <property type="match status" value="1"/>
</dbReference>
<dbReference type="NCBIfam" id="NF002469">
    <property type="entry name" value="PRK01712.1"/>
    <property type="match status" value="1"/>
</dbReference>
<dbReference type="PANTHER" id="PTHR34984">
    <property type="entry name" value="CARBON STORAGE REGULATOR"/>
    <property type="match status" value="1"/>
</dbReference>
<dbReference type="PANTHER" id="PTHR34984:SF1">
    <property type="entry name" value="CARBON STORAGE REGULATOR"/>
    <property type="match status" value="1"/>
</dbReference>
<dbReference type="Pfam" id="PF02599">
    <property type="entry name" value="CsrA"/>
    <property type="match status" value="1"/>
</dbReference>
<dbReference type="SUPFAM" id="SSF117130">
    <property type="entry name" value="CsrA-like"/>
    <property type="match status" value="1"/>
</dbReference>
<comment type="function">
    <text evidence="1">A translational regulator that binds mRNA to regulate translation initiation and/or mRNA stability. Usually binds in the 5'-UTR at or near the Shine-Dalgarno sequence preventing ribosome-binding, thus repressing translation. Its main target seems to be the major flagellin gene, while its function is anatagonized by FliW.</text>
</comment>
<comment type="subunit">
    <text evidence="1">Homodimer; the beta-strands of each monomer intercalate to form a hydrophobic core, while the alpha-helices form wings that extend away from the core.</text>
</comment>
<comment type="subcellular location">
    <subcellularLocation>
        <location evidence="1">Cytoplasm</location>
    </subcellularLocation>
</comment>
<comment type="similarity">
    <text evidence="1">Belongs to the CsrA/RsmA family.</text>
</comment>
<keyword id="KW-1005">Bacterial flagellum biogenesis</keyword>
<keyword id="KW-0963">Cytoplasm</keyword>
<keyword id="KW-0678">Repressor</keyword>
<keyword id="KW-0694">RNA-binding</keyword>
<keyword id="KW-0810">Translation regulation</keyword>
<sequence>MLVLTRRVGEKIVIGEDIVITVLKIEGNSVKIGIEAPRHVKILREELYEELKSENIKASEVSKDDLKGVLKNDKGYKGPGTSS</sequence>
<evidence type="ECO:0000255" key="1">
    <source>
        <dbReference type="HAMAP-Rule" id="MF_00167"/>
    </source>
</evidence>
<reference key="1">
    <citation type="journal article" date="2011" name="J. Bacteriol.">
        <title>Genome sequence of Thermotoga sp. strain RQ2, a hyperthermophilic bacterium isolated from a geothermally heated region of the seafloor near Ribeira Quente, the Azores.</title>
        <authorList>
            <person name="Swithers K.S."/>
            <person name="DiPippo J.L."/>
            <person name="Bruce D.C."/>
            <person name="Detter C."/>
            <person name="Tapia R."/>
            <person name="Han S."/>
            <person name="Saunders E."/>
            <person name="Goodwin L.A."/>
            <person name="Han J."/>
            <person name="Woyke T."/>
            <person name="Pitluck S."/>
            <person name="Pennacchio L."/>
            <person name="Nolan M."/>
            <person name="Mikhailova N."/>
            <person name="Lykidis A."/>
            <person name="Land M.L."/>
            <person name="Brettin T."/>
            <person name="Stetter K.O."/>
            <person name="Nelson K.E."/>
            <person name="Gogarten J.P."/>
            <person name="Noll K.M."/>
        </authorList>
    </citation>
    <scope>NUCLEOTIDE SEQUENCE [LARGE SCALE GENOMIC DNA]</scope>
    <source>
        <strain>RQ2</strain>
    </source>
</reference>
<protein>
    <recommendedName>
        <fullName evidence="1">Translational regulator CsrA</fullName>
    </recommendedName>
</protein>
<name>CSRA_THESQ</name>
<gene>
    <name evidence="1" type="primary">csrA</name>
    <name type="ordered locus">TRQ2_0697</name>
</gene>
<feature type="chain" id="PRO_1000097513" description="Translational regulator CsrA">
    <location>
        <begin position="1"/>
        <end position="83"/>
    </location>
</feature>
<proteinExistence type="inferred from homology"/>
<accession>B1L9Q2</accession>
<organism>
    <name type="scientific">Thermotoga sp. (strain RQ2)</name>
    <dbReference type="NCBI Taxonomy" id="126740"/>
    <lineage>
        <taxon>Bacteria</taxon>
        <taxon>Thermotogati</taxon>
        <taxon>Thermotogota</taxon>
        <taxon>Thermotogae</taxon>
        <taxon>Thermotogales</taxon>
        <taxon>Thermotogaceae</taxon>
        <taxon>Thermotoga</taxon>
    </lineage>
</organism>